<reference key="1">
    <citation type="journal article" date="2006" name="Proc. Natl. Acad. Sci. U.S.A.">
        <title>Comparative genomics of the lactic acid bacteria.</title>
        <authorList>
            <person name="Makarova K.S."/>
            <person name="Slesarev A."/>
            <person name="Wolf Y.I."/>
            <person name="Sorokin A."/>
            <person name="Mirkin B."/>
            <person name="Koonin E.V."/>
            <person name="Pavlov A."/>
            <person name="Pavlova N."/>
            <person name="Karamychev V."/>
            <person name="Polouchine N."/>
            <person name="Shakhova V."/>
            <person name="Grigoriev I."/>
            <person name="Lou Y."/>
            <person name="Rohksar D."/>
            <person name="Lucas S."/>
            <person name="Huang K."/>
            <person name="Goodstein D.M."/>
            <person name="Hawkins T."/>
            <person name="Plengvidhya V."/>
            <person name="Welker D."/>
            <person name="Hughes J."/>
            <person name="Goh Y."/>
            <person name="Benson A."/>
            <person name="Baldwin K."/>
            <person name="Lee J.-H."/>
            <person name="Diaz-Muniz I."/>
            <person name="Dosti B."/>
            <person name="Smeianov V."/>
            <person name="Wechter W."/>
            <person name="Barabote R."/>
            <person name="Lorca G."/>
            <person name="Altermann E."/>
            <person name="Barrangou R."/>
            <person name="Ganesan B."/>
            <person name="Xie Y."/>
            <person name="Rawsthorne H."/>
            <person name="Tamir D."/>
            <person name="Parker C."/>
            <person name="Breidt F."/>
            <person name="Broadbent J.R."/>
            <person name="Hutkins R."/>
            <person name="O'Sullivan D."/>
            <person name="Steele J."/>
            <person name="Unlu G."/>
            <person name="Saier M.H. Jr."/>
            <person name="Klaenhammer T."/>
            <person name="Richardson P."/>
            <person name="Kozyavkin S."/>
            <person name="Weimer B.C."/>
            <person name="Mills D.A."/>
        </authorList>
    </citation>
    <scope>NUCLEOTIDE SEQUENCE [LARGE SCALE GENOMIC DNA]</scope>
    <source>
        <strain>ATCC BAA-491 / LMD-9</strain>
    </source>
</reference>
<comment type="function">
    <text evidence="1">Endonuclease that resolves Holliday junction intermediates in genetic recombination. Cleaves mobile four-strand junctions by introducing symmetrical nicks in paired strands. Promotes annealing of linear ssDNA with homologous dsDNA. Required for DNA repair, homologous recombination and chromosome segregation.</text>
</comment>
<comment type="catalytic activity">
    <reaction evidence="1">
        <text>Endonucleolytic cleavage at a junction such as a reciprocal single-stranded crossover between two homologous DNA duplexes (Holliday junction).</text>
        <dbReference type="EC" id="3.1.21.10"/>
    </reaction>
</comment>
<comment type="cofactor">
    <cofactor evidence="1">
        <name>Mg(2+)</name>
        <dbReference type="ChEBI" id="CHEBI:18420"/>
    </cofactor>
    <text evidence="1">Binds 1 Mg(2+) ion per subunit.</text>
</comment>
<comment type="subcellular location">
    <subcellularLocation>
        <location evidence="1">Cytoplasm</location>
    </subcellularLocation>
</comment>
<comment type="similarity">
    <text evidence="1">Belongs to the RecU family.</text>
</comment>
<dbReference type="EC" id="3.1.21.10" evidence="1"/>
<dbReference type="EMBL" id="CP000419">
    <property type="protein sequence ID" value="ABJ65589.1"/>
    <property type="molecule type" value="Genomic_DNA"/>
</dbReference>
<dbReference type="RefSeq" id="WP_002949408.1">
    <property type="nucleotide sequence ID" value="NZ_CP086001.1"/>
</dbReference>
<dbReference type="SMR" id="Q03MI3"/>
<dbReference type="GeneID" id="66898162"/>
<dbReference type="KEGG" id="ste:STER_0278"/>
<dbReference type="HOGENOM" id="CLU_096340_0_0_9"/>
<dbReference type="GO" id="GO:0005737">
    <property type="term" value="C:cytoplasm"/>
    <property type="evidence" value="ECO:0007669"/>
    <property type="project" value="UniProtKB-SubCell"/>
</dbReference>
<dbReference type="GO" id="GO:0004519">
    <property type="term" value="F:endonuclease activity"/>
    <property type="evidence" value="ECO:0007669"/>
    <property type="project" value="UniProtKB-UniRule"/>
</dbReference>
<dbReference type="GO" id="GO:0000287">
    <property type="term" value="F:magnesium ion binding"/>
    <property type="evidence" value="ECO:0007669"/>
    <property type="project" value="UniProtKB-UniRule"/>
</dbReference>
<dbReference type="GO" id="GO:0003676">
    <property type="term" value="F:nucleic acid binding"/>
    <property type="evidence" value="ECO:0007669"/>
    <property type="project" value="InterPro"/>
</dbReference>
<dbReference type="GO" id="GO:0007059">
    <property type="term" value="P:chromosome segregation"/>
    <property type="evidence" value="ECO:0007669"/>
    <property type="project" value="UniProtKB-UniRule"/>
</dbReference>
<dbReference type="GO" id="GO:0006310">
    <property type="term" value="P:DNA recombination"/>
    <property type="evidence" value="ECO:0007669"/>
    <property type="project" value="UniProtKB-UniRule"/>
</dbReference>
<dbReference type="GO" id="GO:0006281">
    <property type="term" value="P:DNA repair"/>
    <property type="evidence" value="ECO:0007669"/>
    <property type="project" value="UniProtKB-UniRule"/>
</dbReference>
<dbReference type="CDD" id="cd22354">
    <property type="entry name" value="RecU-like"/>
    <property type="match status" value="1"/>
</dbReference>
<dbReference type="Gene3D" id="3.40.1350.10">
    <property type="match status" value="1"/>
</dbReference>
<dbReference type="HAMAP" id="MF_00130">
    <property type="entry name" value="RecU"/>
    <property type="match status" value="1"/>
</dbReference>
<dbReference type="InterPro" id="IPR004612">
    <property type="entry name" value="Resolv_RecU"/>
</dbReference>
<dbReference type="InterPro" id="IPR011335">
    <property type="entry name" value="Restrct_endonuc-II-like"/>
</dbReference>
<dbReference type="InterPro" id="IPR011856">
    <property type="entry name" value="tRNA_endonuc-like_dom_sf"/>
</dbReference>
<dbReference type="NCBIfam" id="NF002580">
    <property type="entry name" value="PRK02234.1-1"/>
    <property type="match status" value="1"/>
</dbReference>
<dbReference type="NCBIfam" id="NF002584">
    <property type="entry name" value="PRK02234.1-5"/>
    <property type="match status" value="1"/>
</dbReference>
<dbReference type="NCBIfam" id="TIGR00648">
    <property type="entry name" value="recU"/>
    <property type="match status" value="1"/>
</dbReference>
<dbReference type="Pfam" id="PF03838">
    <property type="entry name" value="RecU"/>
    <property type="match status" value="1"/>
</dbReference>
<dbReference type="PIRSF" id="PIRSF037785">
    <property type="entry name" value="RecU"/>
    <property type="match status" value="1"/>
</dbReference>
<dbReference type="SUPFAM" id="SSF52980">
    <property type="entry name" value="Restriction endonuclease-like"/>
    <property type="match status" value="1"/>
</dbReference>
<name>RECU_STRTD</name>
<evidence type="ECO:0000255" key="1">
    <source>
        <dbReference type="HAMAP-Rule" id="MF_00130"/>
    </source>
</evidence>
<keyword id="KW-0963">Cytoplasm</keyword>
<keyword id="KW-0227">DNA damage</keyword>
<keyword id="KW-0233">DNA recombination</keyword>
<keyword id="KW-0234">DNA repair</keyword>
<keyword id="KW-0255">Endonuclease</keyword>
<keyword id="KW-0378">Hydrolase</keyword>
<keyword id="KW-0460">Magnesium</keyword>
<keyword id="KW-0479">Metal-binding</keyword>
<keyword id="KW-0540">Nuclease</keyword>
<sequence>MVNYPHQISRKIAQVRTKKSNRVDFANRGMNFESAINATNDYYLSRGLAVIHKKPTPVQIVKVDYPKRSRAKIVEAYFRQASTTDYSGVYKGYYIDFEAKETRQKTSMPMKNFHAHQIKHMSQVINQDGICFVLLHFSTLKETYLLPAKDLIAFYQIDKGTKSMPLDYIKKRGYAIAESAYPQVPYLEIIEKLLGGNT</sequence>
<protein>
    <recommendedName>
        <fullName evidence="1">Holliday junction resolvase RecU</fullName>
        <ecNumber evidence="1">3.1.21.10</ecNumber>
    </recommendedName>
    <alternativeName>
        <fullName evidence="1">Recombination protein U homolog</fullName>
    </alternativeName>
</protein>
<accession>Q03MI3</accession>
<organism>
    <name type="scientific">Streptococcus thermophilus (strain ATCC BAA-491 / LMD-9)</name>
    <dbReference type="NCBI Taxonomy" id="322159"/>
    <lineage>
        <taxon>Bacteria</taxon>
        <taxon>Bacillati</taxon>
        <taxon>Bacillota</taxon>
        <taxon>Bacilli</taxon>
        <taxon>Lactobacillales</taxon>
        <taxon>Streptococcaceae</taxon>
        <taxon>Streptococcus</taxon>
    </lineage>
</organism>
<feature type="chain" id="PRO_1000016759" description="Holliday junction resolvase RecU">
    <location>
        <begin position="1"/>
        <end position="198"/>
    </location>
</feature>
<feature type="binding site" evidence="1">
    <location>
        <position position="83"/>
    </location>
    <ligand>
        <name>Mg(2+)</name>
        <dbReference type="ChEBI" id="CHEBI:18420"/>
    </ligand>
</feature>
<feature type="binding site" evidence="1">
    <location>
        <position position="85"/>
    </location>
    <ligand>
        <name>Mg(2+)</name>
        <dbReference type="ChEBI" id="CHEBI:18420"/>
    </ligand>
</feature>
<feature type="binding site" evidence="1">
    <location>
        <position position="98"/>
    </location>
    <ligand>
        <name>Mg(2+)</name>
        <dbReference type="ChEBI" id="CHEBI:18420"/>
    </ligand>
</feature>
<feature type="binding site" evidence="1">
    <location>
        <position position="117"/>
    </location>
    <ligand>
        <name>Mg(2+)</name>
        <dbReference type="ChEBI" id="CHEBI:18420"/>
    </ligand>
</feature>
<feature type="site" description="Transition state stabilizer" evidence="1">
    <location>
        <position position="100"/>
    </location>
</feature>
<gene>
    <name evidence="1" type="primary">recU</name>
    <name type="ordered locus">STER_0278</name>
</gene>
<proteinExistence type="inferred from homology"/>